<reference key="1">
    <citation type="journal article" date="1991" name="DNA Seq.">
        <title>Nucleotide sequence and organization of genes flanking the transfer origin of promiscuous plasmid RP4.</title>
        <authorList>
            <person name="Ziegelin G."/>
            <person name="Pansegrau W."/>
            <person name="Strack B."/>
            <person name="Balzer D."/>
            <person name="Kroeger M."/>
            <person name="Kruft V."/>
            <person name="Lanka E."/>
        </authorList>
    </citation>
    <scope>NUCLEOTIDE SEQUENCE [GENOMIC DNA]</scope>
    <scope>PROTEIN SEQUENCE OF 1-4</scope>
    <source>
        <strain>ATCC 33694 / HB101</strain>
    </source>
</reference>
<proteinExistence type="evidence at protein level"/>
<gene>
    <name type="primary">traL</name>
</gene>
<name>TRAL4_ECOLX</name>
<protein>
    <recommendedName>
        <fullName>Protein TraL</fullName>
    </recommendedName>
</protein>
<dbReference type="EMBL" id="X54459">
    <property type="protein sequence ID" value="CAA38340.1"/>
    <property type="molecule type" value="Genomic_DNA"/>
</dbReference>
<dbReference type="PIR" id="S23004">
    <property type="entry name" value="S23004"/>
</dbReference>
<dbReference type="RefSeq" id="WP_011205821.1">
    <property type="nucleotide sequence ID" value="NZ_VMTS01000048.1"/>
</dbReference>
<dbReference type="SMR" id="Q00188"/>
<dbReference type="CDD" id="cd05386">
    <property type="entry name" value="TraL"/>
    <property type="match status" value="1"/>
</dbReference>
<dbReference type="Gene3D" id="3.40.50.300">
    <property type="entry name" value="P-loop containing nucleotide triphosphate hydrolases"/>
    <property type="match status" value="1"/>
</dbReference>
<dbReference type="InterPro" id="IPR002586">
    <property type="entry name" value="CobQ/CobB/MinD/ParA_Nub-bd_dom"/>
</dbReference>
<dbReference type="InterPro" id="IPR027417">
    <property type="entry name" value="P-loop_NTPase"/>
</dbReference>
<dbReference type="NCBIfam" id="NF010461">
    <property type="entry name" value="PRK13886.1"/>
    <property type="match status" value="1"/>
</dbReference>
<dbReference type="Pfam" id="PF01656">
    <property type="entry name" value="CbiA"/>
    <property type="match status" value="1"/>
</dbReference>
<dbReference type="SUPFAM" id="SSF52540">
    <property type="entry name" value="P-loop containing nucleoside triphosphate hydrolases"/>
    <property type="match status" value="1"/>
</dbReference>
<feature type="chain" id="PRO_0000068600" description="Protein TraL">
    <location>
        <begin position="1"/>
        <end position="241"/>
    </location>
</feature>
<geneLocation type="plasmid">
    <name>IncP-alpha RP4</name>
</geneLocation>
<comment type="similarity">
    <text evidence="1">To plasmid R751 TraL.</text>
</comment>
<evidence type="ECO:0000305" key="1"/>
<accession>Q00188</accession>
<keyword id="KW-0184">Conjugation</keyword>
<keyword id="KW-0903">Direct protein sequencing</keyword>
<keyword id="KW-0614">Plasmid</keyword>
<organism>
    <name type="scientific">Escherichia coli</name>
    <dbReference type="NCBI Taxonomy" id="562"/>
    <lineage>
        <taxon>Bacteria</taxon>
        <taxon>Pseudomonadati</taxon>
        <taxon>Pseudomonadota</taxon>
        <taxon>Gammaproteobacteria</taxon>
        <taxon>Enterobacterales</taxon>
        <taxon>Enterobacteriaceae</taxon>
        <taxon>Escherichia</taxon>
    </lineage>
</organism>
<sequence>MAKIHMVLQGKGGVGKSAIAAIIAQYKMDKGQTPLCIDTDPVNATFEGYKALNVRRLNIMAGDEINSRNFDTLVELIAPTKDDVVIDNGASSFVPLSHYLISNQVPALLQEMGHELVIHTVVTGGQALLDTVSGFAQLASQFPAEALFVVWLNPYWGPIEHEGKSFEQMKAYTANKARVSSIIQIPALKEETYGRDFSDMLQERLTFDQALADESLTIMTRQRLKIVRRGLFEQLDAAAVL</sequence>